<sequence>MSAPPPLQIREANAHLAAVHRRAAELERRLLAAERTMRAQAERLACQDQQLRAALDELGRAKDREIFTLQEQLLSSEATVRSLQAAVEQRDQMIQELQPRADLLQDITRQRPPLAALLATLEEAEELGPLPSSHSHGAQLLPDGPGPPLGNSMREEEGQDDQQPAVFGTTV</sequence>
<dbReference type="EMBL" id="AY521229">
    <property type="protein sequence ID" value="AAS66000.1"/>
    <property type="molecule type" value="mRNA"/>
</dbReference>
<dbReference type="RefSeq" id="NP_001001720.1">
    <property type="nucleotide sequence ID" value="NM_001001720.2"/>
</dbReference>
<dbReference type="SMR" id="Q6QZQ4"/>
<dbReference type="FunCoup" id="Q6QZQ4">
    <property type="interactions" value="146"/>
</dbReference>
<dbReference type="STRING" id="10116.ENSRNOP00000067724"/>
<dbReference type="PhosphoSitePlus" id="Q6QZQ4"/>
<dbReference type="PaxDb" id="10116-ENSRNOP00000067724"/>
<dbReference type="GeneID" id="363327"/>
<dbReference type="KEGG" id="rno:363327"/>
<dbReference type="AGR" id="RGD:1303340"/>
<dbReference type="CTD" id="400673"/>
<dbReference type="RGD" id="1303340">
    <property type="gene designation" value="Vmac"/>
</dbReference>
<dbReference type="eggNOG" id="ENOG502SD5N">
    <property type="taxonomic scope" value="Eukaryota"/>
</dbReference>
<dbReference type="HOGENOM" id="CLU_136281_0_0_1"/>
<dbReference type="InParanoid" id="Q6QZQ4"/>
<dbReference type="OrthoDB" id="6413631at2759"/>
<dbReference type="PhylomeDB" id="Q6QZQ4"/>
<dbReference type="PRO" id="PR:Q6QZQ4"/>
<dbReference type="Proteomes" id="UP000002494">
    <property type="component" value="Chromosome 9"/>
</dbReference>
<dbReference type="Bgee" id="ENSRNOG00000048897">
    <property type="expression patterns" value="Expressed in adult mammalian kidney and 19 other cell types or tissues"/>
</dbReference>
<dbReference type="GO" id="GO:0005737">
    <property type="term" value="C:cytoplasm"/>
    <property type="evidence" value="ECO:0007669"/>
    <property type="project" value="UniProtKB-SubCell"/>
</dbReference>
<dbReference type="GO" id="GO:0045098">
    <property type="term" value="C:type III intermediate filament"/>
    <property type="evidence" value="ECO:0000314"/>
    <property type="project" value="RGD"/>
</dbReference>
<gene>
    <name type="primary">Vmac</name>
</gene>
<feature type="chain" id="PRO_0000319068" description="Vimentin-type intermediate filament-associated coiled-coil protein">
    <location>
        <begin position="1"/>
        <end position="171"/>
    </location>
</feature>
<feature type="region of interest" description="Disordered" evidence="2">
    <location>
        <begin position="126"/>
        <end position="171"/>
    </location>
</feature>
<feature type="coiled-coil region" evidence="1">
    <location>
        <begin position="7"/>
        <end position="98"/>
    </location>
</feature>
<proteinExistence type="evidence at transcript level"/>
<protein>
    <recommendedName>
        <fullName>Vimentin-type intermediate filament-associated coiled-coil protein</fullName>
    </recommendedName>
</protein>
<reference key="1">
    <citation type="journal article" date="2004" name="Biochem. Biophys. Res. Commun.">
        <title>Vmac: a novel protein associated with vimentin-type intermediate filament in podocytes of rat kidney.</title>
        <authorList>
            <person name="Yamamoto Y."/>
            <person name="Irie K."/>
            <person name="Kurihara H."/>
            <person name="Sakai T."/>
            <person name="Takai Y."/>
        </authorList>
    </citation>
    <scope>NUCLEOTIDE SEQUENCE [MRNA]</scope>
    <scope>SUBCELLULAR LOCATION</scope>
    <scope>TISSUE SPECIFICITY</scope>
    <source>
        <strain>Sprague-Dawley</strain>
    </source>
</reference>
<comment type="subcellular location">
    <subcellularLocation>
        <location evidence="3">Cytoplasm</location>
    </subcellularLocation>
    <text>Colocalizes with vimentin-type intermediate filaments.</text>
</comment>
<comment type="tissue specificity">
    <text evidence="3">Expressed in brain, heart, kidney, liver, lung, skeletal muscle, spleen and testis. Within the kidney expression is pronounced within glomeruli.</text>
</comment>
<organism>
    <name type="scientific">Rattus norvegicus</name>
    <name type="common">Rat</name>
    <dbReference type="NCBI Taxonomy" id="10116"/>
    <lineage>
        <taxon>Eukaryota</taxon>
        <taxon>Metazoa</taxon>
        <taxon>Chordata</taxon>
        <taxon>Craniata</taxon>
        <taxon>Vertebrata</taxon>
        <taxon>Euteleostomi</taxon>
        <taxon>Mammalia</taxon>
        <taxon>Eutheria</taxon>
        <taxon>Euarchontoglires</taxon>
        <taxon>Glires</taxon>
        <taxon>Rodentia</taxon>
        <taxon>Myomorpha</taxon>
        <taxon>Muroidea</taxon>
        <taxon>Muridae</taxon>
        <taxon>Murinae</taxon>
        <taxon>Rattus</taxon>
    </lineage>
</organism>
<accession>Q6QZQ4</accession>
<name>VMAC_RAT</name>
<evidence type="ECO:0000255" key="1"/>
<evidence type="ECO:0000256" key="2">
    <source>
        <dbReference type="SAM" id="MobiDB-lite"/>
    </source>
</evidence>
<evidence type="ECO:0000269" key="3">
    <source>
    </source>
</evidence>
<keyword id="KW-0175">Coiled coil</keyword>
<keyword id="KW-0963">Cytoplasm</keyword>
<keyword id="KW-1185">Reference proteome</keyword>